<dbReference type="EC" id="6.3.2.13" evidence="1"/>
<dbReference type="EMBL" id="CP000269">
    <property type="protein sequence ID" value="ABR89221.1"/>
    <property type="molecule type" value="Genomic_DNA"/>
</dbReference>
<dbReference type="RefSeq" id="WP_012080869.1">
    <property type="nucleotide sequence ID" value="NC_009659.1"/>
</dbReference>
<dbReference type="SMR" id="A6T2G3"/>
<dbReference type="STRING" id="375286.mma_3020"/>
<dbReference type="KEGG" id="mms:mma_3020"/>
<dbReference type="eggNOG" id="COG0769">
    <property type="taxonomic scope" value="Bacteria"/>
</dbReference>
<dbReference type="HOGENOM" id="CLU_022291_3_2_4"/>
<dbReference type="OrthoDB" id="9800958at2"/>
<dbReference type="UniPathway" id="UPA00219"/>
<dbReference type="Proteomes" id="UP000006388">
    <property type="component" value="Chromosome"/>
</dbReference>
<dbReference type="GO" id="GO:0005737">
    <property type="term" value="C:cytoplasm"/>
    <property type="evidence" value="ECO:0007669"/>
    <property type="project" value="UniProtKB-SubCell"/>
</dbReference>
<dbReference type="GO" id="GO:0005524">
    <property type="term" value="F:ATP binding"/>
    <property type="evidence" value="ECO:0007669"/>
    <property type="project" value="UniProtKB-UniRule"/>
</dbReference>
<dbReference type="GO" id="GO:0000287">
    <property type="term" value="F:magnesium ion binding"/>
    <property type="evidence" value="ECO:0007669"/>
    <property type="project" value="UniProtKB-UniRule"/>
</dbReference>
<dbReference type="GO" id="GO:0008765">
    <property type="term" value="F:UDP-N-acetylmuramoylalanyl-D-glutamate-2,6-diaminopimelate ligase activity"/>
    <property type="evidence" value="ECO:0007669"/>
    <property type="project" value="UniProtKB-UniRule"/>
</dbReference>
<dbReference type="GO" id="GO:0051301">
    <property type="term" value="P:cell division"/>
    <property type="evidence" value="ECO:0007669"/>
    <property type="project" value="UniProtKB-KW"/>
</dbReference>
<dbReference type="GO" id="GO:0071555">
    <property type="term" value="P:cell wall organization"/>
    <property type="evidence" value="ECO:0007669"/>
    <property type="project" value="UniProtKB-KW"/>
</dbReference>
<dbReference type="GO" id="GO:0009252">
    <property type="term" value="P:peptidoglycan biosynthetic process"/>
    <property type="evidence" value="ECO:0007669"/>
    <property type="project" value="UniProtKB-UniRule"/>
</dbReference>
<dbReference type="GO" id="GO:0008360">
    <property type="term" value="P:regulation of cell shape"/>
    <property type="evidence" value="ECO:0007669"/>
    <property type="project" value="UniProtKB-KW"/>
</dbReference>
<dbReference type="Gene3D" id="3.90.190.20">
    <property type="entry name" value="Mur ligase, C-terminal domain"/>
    <property type="match status" value="1"/>
</dbReference>
<dbReference type="Gene3D" id="3.40.1190.10">
    <property type="entry name" value="Mur-like, catalytic domain"/>
    <property type="match status" value="1"/>
</dbReference>
<dbReference type="Gene3D" id="3.40.1390.10">
    <property type="entry name" value="MurE/MurF, N-terminal domain"/>
    <property type="match status" value="1"/>
</dbReference>
<dbReference type="HAMAP" id="MF_00208">
    <property type="entry name" value="MurE"/>
    <property type="match status" value="1"/>
</dbReference>
<dbReference type="InterPro" id="IPR036565">
    <property type="entry name" value="Mur-like_cat_sf"/>
</dbReference>
<dbReference type="InterPro" id="IPR004101">
    <property type="entry name" value="Mur_ligase_C"/>
</dbReference>
<dbReference type="InterPro" id="IPR036615">
    <property type="entry name" value="Mur_ligase_C_dom_sf"/>
</dbReference>
<dbReference type="InterPro" id="IPR013221">
    <property type="entry name" value="Mur_ligase_cen"/>
</dbReference>
<dbReference type="InterPro" id="IPR000713">
    <property type="entry name" value="Mur_ligase_N"/>
</dbReference>
<dbReference type="InterPro" id="IPR035911">
    <property type="entry name" value="MurE/MurF_N"/>
</dbReference>
<dbReference type="InterPro" id="IPR005761">
    <property type="entry name" value="UDP-N-AcMur-Glu-dNH2Pim_ligase"/>
</dbReference>
<dbReference type="NCBIfam" id="TIGR01085">
    <property type="entry name" value="murE"/>
    <property type="match status" value="1"/>
</dbReference>
<dbReference type="NCBIfam" id="NF001126">
    <property type="entry name" value="PRK00139.1-4"/>
    <property type="match status" value="1"/>
</dbReference>
<dbReference type="PANTHER" id="PTHR23135">
    <property type="entry name" value="MUR LIGASE FAMILY MEMBER"/>
    <property type="match status" value="1"/>
</dbReference>
<dbReference type="PANTHER" id="PTHR23135:SF4">
    <property type="entry name" value="UDP-N-ACETYLMURAMOYL-L-ALANYL-D-GLUTAMATE--2,6-DIAMINOPIMELATE LIGASE MURE HOMOLOG, CHLOROPLASTIC"/>
    <property type="match status" value="1"/>
</dbReference>
<dbReference type="Pfam" id="PF01225">
    <property type="entry name" value="Mur_ligase"/>
    <property type="match status" value="1"/>
</dbReference>
<dbReference type="Pfam" id="PF02875">
    <property type="entry name" value="Mur_ligase_C"/>
    <property type="match status" value="1"/>
</dbReference>
<dbReference type="Pfam" id="PF08245">
    <property type="entry name" value="Mur_ligase_M"/>
    <property type="match status" value="1"/>
</dbReference>
<dbReference type="SUPFAM" id="SSF53623">
    <property type="entry name" value="MurD-like peptide ligases, catalytic domain"/>
    <property type="match status" value="1"/>
</dbReference>
<dbReference type="SUPFAM" id="SSF53244">
    <property type="entry name" value="MurD-like peptide ligases, peptide-binding domain"/>
    <property type="match status" value="1"/>
</dbReference>
<dbReference type="SUPFAM" id="SSF63418">
    <property type="entry name" value="MurE/MurF N-terminal domain"/>
    <property type="match status" value="1"/>
</dbReference>
<reference key="1">
    <citation type="journal article" date="2007" name="PLoS Genet.">
        <title>Genome analysis of Minibacterium massiliensis highlights the convergent evolution of water-living bacteria.</title>
        <authorList>
            <person name="Audic S."/>
            <person name="Robert C."/>
            <person name="Campagna B."/>
            <person name="Parinello H."/>
            <person name="Claverie J.-M."/>
            <person name="Raoult D."/>
            <person name="Drancourt M."/>
        </authorList>
    </citation>
    <scope>NUCLEOTIDE SEQUENCE [LARGE SCALE GENOMIC DNA]</scope>
    <source>
        <strain>Marseille</strain>
    </source>
</reference>
<accession>A6T2G3</accession>
<organism>
    <name type="scientific">Janthinobacterium sp. (strain Marseille)</name>
    <name type="common">Minibacterium massiliensis</name>
    <dbReference type="NCBI Taxonomy" id="375286"/>
    <lineage>
        <taxon>Bacteria</taxon>
        <taxon>Pseudomonadati</taxon>
        <taxon>Pseudomonadota</taxon>
        <taxon>Betaproteobacteria</taxon>
        <taxon>Burkholderiales</taxon>
        <taxon>Oxalobacteraceae</taxon>
        <taxon>Janthinobacterium</taxon>
    </lineage>
</organism>
<evidence type="ECO:0000255" key="1">
    <source>
        <dbReference type="HAMAP-Rule" id="MF_00208"/>
    </source>
</evidence>
<name>MURE_JANMA</name>
<feature type="chain" id="PRO_1000012360" description="UDP-N-acetylmuramoyl-L-alanyl-D-glutamate--2,6-diaminopimelate ligase">
    <location>
        <begin position="1"/>
        <end position="508"/>
    </location>
</feature>
<feature type="short sequence motif" description="Meso-diaminopimelate recognition motif">
    <location>
        <begin position="421"/>
        <end position="424"/>
    </location>
</feature>
<feature type="binding site" evidence="1">
    <location>
        <position position="29"/>
    </location>
    <ligand>
        <name>UDP-N-acetyl-alpha-D-muramoyl-L-alanyl-D-glutamate</name>
        <dbReference type="ChEBI" id="CHEBI:83900"/>
    </ligand>
</feature>
<feature type="binding site" evidence="1">
    <location>
        <begin position="112"/>
        <end position="118"/>
    </location>
    <ligand>
        <name>ATP</name>
        <dbReference type="ChEBI" id="CHEBI:30616"/>
    </ligand>
</feature>
<feature type="binding site" evidence="1">
    <location>
        <begin position="159"/>
        <end position="160"/>
    </location>
    <ligand>
        <name>UDP-N-acetyl-alpha-D-muramoyl-L-alanyl-D-glutamate</name>
        <dbReference type="ChEBI" id="CHEBI:83900"/>
    </ligand>
</feature>
<feature type="binding site" evidence="1">
    <location>
        <position position="186"/>
    </location>
    <ligand>
        <name>UDP-N-acetyl-alpha-D-muramoyl-L-alanyl-D-glutamate</name>
        <dbReference type="ChEBI" id="CHEBI:83900"/>
    </ligand>
</feature>
<feature type="binding site" evidence="1">
    <location>
        <position position="192"/>
    </location>
    <ligand>
        <name>UDP-N-acetyl-alpha-D-muramoyl-L-alanyl-D-glutamate</name>
        <dbReference type="ChEBI" id="CHEBI:83900"/>
    </ligand>
</feature>
<feature type="binding site" evidence="1">
    <location>
        <position position="194"/>
    </location>
    <ligand>
        <name>UDP-N-acetyl-alpha-D-muramoyl-L-alanyl-D-glutamate</name>
        <dbReference type="ChEBI" id="CHEBI:83900"/>
    </ligand>
</feature>
<feature type="binding site" evidence="1">
    <location>
        <position position="398"/>
    </location>
    <ligand>
        <name>meso-2,6-diaminopimelate</name>
        <dbReference type="ChEBI" id="CHEBI:57791"/>
    </ligand>
</feature>
<feature type="binding site" evidence="1">
    <location>
        <begin position="421"/>
        <end position="424"/>
    </location>
    <ligand>
        <name>meso-2,6-diaminopimelate</name>
        <dbReference type="ChEBI" id="CHEBI:57791"/>
    </ligand>
</feature>
<feature type="binding site" evidence="1">
    <location>
        <position position="473"/>
    </location>
    <ligand>
        <name>meso-2,6-diaminopimelate</name>
        <dbReference type="ChEBI" id="CHEBI:57791"/>
    </ligand>
</feature>
<feature type="binding site" evidence="1">
    <location>
        <position position="477"/>
    </location>
    <ligand>
        <name>meso-2,6-diaminopimelate</name>
        <dbReference type="ChEBI" id="CHEBI:57791"/>
    </ligand>
</feature>
<feature type="modified residue" description="N6-carboxylysine" evidence="1">
    <location>
        <position position="226"/>
    </location>
</feature>
<comment type="function">
    <text evidence="1">Catalyzes the addition of meso-diaminopimelic acid to the nucleotide precursor UDP-N-acetylmuramoyl-L-alanyl-D-glutamate (UMAG) in the biosynthesis of bacterial cell-wall peptidoglycan.</text>
</comment>
<comment type="catalytic activity">
    <reaction evidence="1">
        <text>UDP-N-acetyl-alpha-D-muramoyl-L-alanyl-D-glutamate + meso-2,6-diaminopimelate + ATP = UDP-N-acetyl-alpha-D-muramoyl-L-alanyl-gamma-D-glutamyl-meso-2,6-diaminopimelate + ADP + phosphate + H(+)</text>
        <dbReference type="Rhea" id="RHEA:23676"/>
        <dbReference type="ChEBI" id="CHEBI:15378"/>
        <dbReference type="ChEBI" id="CHEBI:30616"/>
        <dbReference type="ChEBI" id="CHEBI:43474"/>
        <dbReference type="ChEBI" id="CHEBI:57791"/>
        <dbReference type="ChEBI" id="CHEBI:83900"/>
        <dbReference type="ChEBI" id="CHEBI:83905"/>
        <dbReference type="ChEBI" id="CHEBI:456216"/>
        <dbReference type="EC" id="6.3.2.13"/>
    </reaction>
</comment>
<comment type="cofactor">
    <cofactor evidence="1">
        <name>Mg(2+)</name>
        <dbReference type="ChEBI" id="CHEBI:18420"/>
    </cofactor>
</comment>
<comment type="pathway">
    <text evidence="1">Cell wall biogenesis; peptidoglycan biosynthesis.</text>
</comment>
<comment type="subcellular location">
    <subcellularLocation>
        <location evidence="1">Cytoplasm</location>
    </subcellularLocation>
</comment>
<comment type="PTM">
    <text evidence="1">Carboxylation is probably crucial for Mg(2+) binding and, consequently, for the gamma-phosphate positioning of ATP.</text>
</comment>
<comment type="similarity">
    <text evidence="1">Belongs to the MurCDEF family. MurE subfamily.</text>
</comment>
<proteinExistence type="inferred from homology"/>
<keyword id="KW-0067">ATP-binding</keyword>
<keyword id="KW-0131">Cell cycle</keyword>
<keyword id="KW-0132">Cell division</keyword>
<keyword id="KW-0133">Cell shape</keyword>
<keyword id="KW-0961">Cell wall biogenesis/degradation</keyword>
<keyword id="KW-0963">Cytoplasm</keyword>
<keyword id="KW-0436">Ligase</keyword>
<keyword id="KW-0460">Magnesium</keyword>
<keyword id="KW-0547">Nucleotide-binding</keyword>
<keyword id="KW-0573">Peptidoglycan synthesis</keyword>
<protein>
    <recommendedName>
        <fullName evidence="1">UDP-N-acetylmuramoyl-L-alanyl-D-glutamate--2,6-diaminopimelate ligase</fullName>
        <ecNumber evidence="1">6.3.2.13</ecNumber>
    </recommendedName>
    <alternativeName>
        <fullName evidence="1">Meso-A2pm-adding enzyme</fullName>
    </alternativeName>
    <alternativeName>
        <fullName evidence="1">Meso-diaminopimelate-adding enzyme</fullName>
    </alternativeName>
    <alternativeName>
        <fullName evidence="1">UDP-MurNAc-L-Ala-D-Glu:meso-diaminopimelate ligase</fullName>
    </alternativeName>
    <alternativeName>
        <fullName evidence="1">UDP-MurNAc-tripeptide synthetase</fullName>
    </alternativeName>
    <alternativeName>
        <fullName evidence="1">UDP-N-acetylmuramyl-tripeptide synthetase</fullName>
    </alternativeName>
</protein>
<sequence>MSILTTTALASILDWLAANAPKAELASDSRRIAQGDVFVAYPGDEADGRSYIANAIERGAQAVIYEAAGCTWDAEWDVAHLAIDDLKEHAGEIAAAYYAHPDRSMFTVAITGTNGKTSCAQWLGSALSRLGQPTAVIGTLGVGIFTNGGHGSFDVTGYTTPDAVLLQRSLVNVSNLGATALAIEASSIGLHQGRLSGMHFDMALFTNFTRDHLDYHGDMAAYEEAKAMLFDWPGLQHAVINLDDAMGVRLVQRLQSRQADVGITGYTLSDKKIDGIAVLRATDIRSNQSGTVFQLESSAGNTQVKTQLVGQFNVSNVLGIIGILLAKGIALQDAVNAVEALTAVPGRMQQLGGGEAPLVVIDYAHTPDALEKTLATLRSVANDRGGELWCVFGCGGDRDPGKRPQMGKVSMAADHIVVTTDNPRNEEPANIIGDIVAGITAPKNAPQIIEDRASAILWAGRHAARQDVILLAGKGHEAYQEVKGRKLPFLDADHAALALSTRVMQGAS</sequence>
<gene>
    <name evidence="1" type="primary">murE</name>
    <name type="ordered locus">mma_3020</name>
</gene>